<proteinExistence type="evidence at protein level"/>
<feature type="signal peptide">
    <location>
        <begin position="1"/>
        <end position="24"/>
    </location>
</feature>
<feature type="chain" id="PRO_0000005937" description="Complement C3">
    <location>
        <begin position="25"/>
        <end position="1663"/>
    </location>
</feature>
<feature type="chain" id="PRO_0000005938" description="Complement C3 beta chain">
    <location>
        <begin position="25"/>
        <end position="666"/>
    </location>
</feature>
<feature type="chain" id="PRO_0000395292" description="C3-beta-c" evidence="8">
    <location>
        <begin position="568"/>
        <end position="666"/>
    </location>
</feature>
<feature type="chain" id="PRO_0000005939" description="Complement C3 alpha chain">
    <location>
        <begin position="671"/>
        <end position="1663"/>
    </location>
</feature>
<feature type="chain" id="PRO_0000005940" description="C3a anaphylatoxin" evidence="5">
    <location>
        <begin position="671"/>
        <end position="748"/>
    </location>
</feature>
<feature type="chain" id="PRO_0000419937" description="Acylation stimulating protein" evidence="1">
    <location>
        <begin position="671"/>
        <end position="747"/>
    </location>
</feature>
<feature type="chain" id="PRO_0000005941" description="Complement C3b">
    <location>
        <begin position="749"/>
        <end position="1663"/>
    </location>
</feature>
<feature type="chain" id="PRO_0000273950" description="Complement C3c alpha' chain fragment 1">
    <location>
        <begin position="749"/>
        <end position="959"/>
    </location>
</feature>
<feature type="chain" id="PRO_0000273951" description="Complement C3dg fragment" evidence="1">
    <location>
        <begin position="960"/>
        <end position="1303"/>
    </location>
</feature>
<feature type="chain" id="PRO_0000273952" description="Complement C3g fragment" evidence="1">
    <location>
        <begin position="960"/>
        <end position="1001"/>
    </location>
</feature>
<feature type="chain" id="PRO_0000273953" description="Complement C3d fragment" evidence="1">
    <location>
        <begin position="1002"/>
        <end position="1303"/>
    </location>
</feature>
<feature type="peptide" id="PRO_0000273954" description="Complement C3f fragment" evidence="1">
    <location>
        <begin position="1304"/>
        <end position="1320"/>
    </location>
</feature>
<feature type="chain" id="PRO_0000273955" description="Complement C3c alpha' chain fragment 2" evidence="1">
    <location>
        <begin position="1321"/>
        <end position="1663"/>
    </location>
</feature>
<feature type="domain" description="Anaphylatoxin-like" evidence="3">
    <location>
        <begin position="693"/>
        <end position="728"/>
    </location>
</feature>
<feature type="domain" description="NTR" evidence="4">
    <location>
        <begin position="1518"/>
        <end position="1661"/>
    </location>
</feature>
<feature type="region of interest" description="Interaction with CFP/properdin" evidence="1">
    <location>
        <begin position="1634"/>
        <end position="1659"/>
    </location>
</feature>
<feature type="site" description="Cleavage; by carboxypeptidases" evidence="1">
    <location>
        <begin position="747"/>
        <end position="748"/>
    </location>
</feature>
<feature type="site" description="Cleavage; by C3 convertase" evidence="1">
    <location>
        <begin position="748"/>
        <end position="749"/>
    </location>
</feature>
<feature type="site" description="Cleavage; by factor I" evidence="2">
    <location>
        <begin position="959"/>
        <end position="960"/>
    </location>
</feature>
<feature type="site" description="Cleavage; by factor I" evidence="1">
    <location>
        <begin position="1303"/>
        <end position="1304"/>
    </location>
</feature>
<feature type="site" description="Cleavage; by factor I" evidence="1">
    <location>
        <begin position="1320"/>
        <end position="1321"/>
    </location>
</feature>
<feature type="site" description="Coordinates Mg(2+) for interaction with Complement factor B Bb fragment (CFB)" evidence="1">
    <location>
        <position position="1663"/>
    </location>
</feature>
<feature type="modified residue" description="Phosphoserine" evidence="1">
    <location>
        <position position="40"/>
    </location>
</feature>
<feature type="modified residue" description="Phosphoserine" evidence="1">
    <location>
        <position position="297"/>
    </location>
</feature>
<feature type="modified residue" description="Phosphoserine" evidence="1">
    <location>
        <position position="303"/>
    </location>
</feature>
<feature type="modified residue" description="Phosphoserine" evidence="9">
    <location>
        <position position="671"/>
    </location>
</feature>
<feature type="modified residue" description="Phosphoserine" evidence="1">
    <location>
        <position position="968"/>
    </location>
</feature>
<feature type="modified residue" description="Phosphoserine" evidence="1">
    <location>
        <position position="1321"/>
    </location>
</feature>
<feature type="modified residue" description="Phosphoserine" evidence="1">
    <location>
        <position position="1573"/>
    </location>
</feature>
<feature type="glycosylation site" description="N-linked (GlcNAc...) asparagine" evidence="2">
    <location>
        <position position="939"/>
    </location>
</feature>
<feature type="glycosylation site" description="N-linked (GlcNAc...) asparagine" evidence="2">
    <location>
        <position position="1617"/>
    </location>
</feature>
<feature type="disulfide bond" description="Interchain (between beta and alpha chains)" evidence="3 4">
    <location>
        <begin position="558"/>
        <end position="816"/>
    </location>
</feature>
<feature type="disulfide bond" evidence="1">
    <location>
        <begin position="626"/>
        <end position="661"/>
    </location>
</feature>
<feature type="disulfide bond" evidence="1">
    <location>
        <begin position="693"/>
        <end position="720"/>
    </location>
</feature>
<feature type="disulfide bond" evidence="1">
    <location>
        <begin position="694"/>
        <end position="727"/>
    </location>
</feature>
<feature type="disulfide bond" evidence="1">
    <location>
        <begin position="707"/>
        <end position="728"/>
    </location>
</feature>
<feature type="disulfide bond" evidence="1">
    <location>
        <begin position="873"/>
        <end position="1513"/>
    </location>
</feature>
<feature type="disulfide bond" evidence="1">
    <location>
        <begin position="1101"/>
        <end position="1158"/>
    </location>
</feature>
<feature type="disulfide bond" evidence="1">
    <location>
        <begin position="1358"/>
        <end position="1489"/>
    </location>
</feature>
<feature type="disulfide bond" evidence="1">
    <location>
        <begin position="1389"/>
        <end position="1458"/>
    </location>
</feature>
<feature type="disulfide bond" evidence="1">
    <location>
        <begin position="1506"/>
        <end position="1511"/>
    </location>
</feature>
<feature type="disulfide bond" evidence="1">
    <location>
        <begin position="1518"/>
        <end position="1590"/>
    </location>
</feature>
<feature type="disulfide bond" evidence="1">
    <location>
        <begin position="1537"/>
        <end position="1661"/>
    </location>
</feature>
<feature type="cross-link" description="Isoglutamyl cysteine thioester (Cys-Gln)" evidence="1">
    <location>
        <begin position="1010"/>
        <end position="1013"/>
    </location>
</feature>
<feature type="sequence conflict" description="In Ref. 4; AAG00532." evidence="7" ref="4">
    <original>P</original>
    <variation>K</variation>
    <location>
        <position position="704"/>
    </location>
</feature>
<feature type="sequence conflict" description="In Ref. 3; AA sequence." evidence="7" ref="3">
    <original>LK</original>
    <variation>KL</variation>
    <location>
        <begin position="721"/>
        <end position="722"/>
    </location>
</feature>
<feature type="helix" evidence="10">
    <location>
        <begin position="1013"/>
        <end position="1031"/>
    </location>
</feature>
<feature type="helix" evidence="10">
    <location>
        <begin position="1034"/>
        <end position="1037"/>
    </location>
</feature>
<feature type="helix" evidence="10">
    <location>
        <begin position="1039"/>
        <end position="1041"/>
    </location>
</feature>
<feature type="helix" evidence="10">
    <location>
        <begin position="1042"/>
        <end position="1057"/>
    </location>
</feature>
<feature type="helix" evidence="10">
    <location>
        <begin position="1076"/>
        <end position="1089"/>
    </location>
</feature>
<feature type="turn" evidence="10">
    <location>
        <begin position="1090"/>
        <end position="1092"/>
    </location>
</feature>
<feature type="helix" evidence="10">
    <location>
        <begin position="1097"/>
        <end position="1111"/>
    </location>
</feature>
<feature type="helix" evidence="10">
    <location>
        <begin position="1127"/>
        <end position="1134"/>
    </location>
</feature>
<feature type="helix" evidence="10">
    <location>
        <begin position="1139"/>
        <end position="1158"/>
    </location>
</feature>
<feature type="turn" evidence="10">
    <location>
        <begin position="1159"/>
        <end position="1161"/>
    </location>
</feature>
<feature type="helix" evidence="10">
    <location>
        <begin position="1165"/>
        <end position="1180"/>
    </location>
</feature>
<feature type="helix" evidence="10">
    <location>
        <begin position="1186"/>
        <end position="1198"/>
    </location>
</feature>
<feature type="helix" evidence="10">
    <location>
        <begin position="1206"/>
        <end position="1213"/>
    </location>
</feature>
<feature type="turn" evidence="10">
    <location>
        <begin position="1216"/>
        <end position="1218"/>
    </location>
</feature>
<feature type="helix" evidence="10">
    <location>
        <begin position="1226"/>
        <end position="1242"/>
    </location>
</feature>
<feature type="turn" evidence="11">
    <location>
        <begin position="1246"/>
        <end position="1248"/>
    </location>
</feature>
<feature type="helix" evidence="10">
    <location>
        <begin position="1249"/>
        <end position="1258"/>
    </location>
</feature>
<feature type="helix" evidence="10">
    <location>
        <begin position="1269"/>
        <end position="1285"/>
    </location>
</feature>
<reference key="1">
    <citation type="journal article" date="1990" name="Nucleic Acids Res.">
        <title>Nucleotide and deduced amino acid sequence of rat complement C3.</title>
        <authorList>
            <person name="Misumi Y."/>
            <person name="Sohda M."/>
            <person name="Ikehara Y."/>
        </authorList>
    </citation>
    <scope>NUCLEOTIDE SEQUENCE [MRNA]</scope>
    <source>
        <strain>Wistar</strain>
        <tissue>Liver</tissue>
    </source>
</reference>
<reference key="2">
    <citation type="journal article" date="1993" name="Biochem. Biophys. Res. Commun.">
        <title>Complement component C3-derived neutrophil chemotactic factors purified from exudate of rat carrageenin-induced inflammation.</title>
        <authorList>
            <person name="Nakagawa H."/>
            <person name="Komorita N."/>
        </authorList>
    </citation>
    <scope>PROTEIN SEQUENCE OF 568-592 AND 671-687</scope>
    <scope>IDENTIFICATION OF C3A ANAPHYLATOXIN AND C3-BETA-C</scope>
    <scope>FUNCTION</scope>
    <source>
        <tissue>Neutrophil</tissue>
    </source>
</reference>
<reference key="3">
    <citation type="journal article" date="1978" name="Biochemistry">
        <title>Purification, characterization, and amino acid sequence of rat anaphylatoxin (C3a).</title>
        <authorList>
            <person name="Jacobs J.W."/>
            <person name="Rubin J.S."/>
            <person name="Hugli T.E."/>
            <person name="Bogardt R.A. Jr."/>
            <person name="Mariz I.K."/>
            <person name="Daniels J.S."/>
            <person name="Daughaday W.H."/>
            <person name="Bradshaw R.A."/>
        </authorList>
    </citation>
    <scope>PROTEIN SEQUENCE OF 671-748</scope>
</reference>
<reference key="4">
    <citation type="submission" date="2000-07" db="EMBL/GenBank/DDBJ databases">
        <title>Nucleotide and deduced amino acid sequence of rat complement component C3a derived from Sprague-Dawley strain.</title>
        <authorList>
            <person name="Wahrmann M."/>
            <person name="Krieger S."/>
            <person name="Liewehr A."/>
        </authorList>
    </citation>
    <scope>NUCLEOTIDE SEQUENCE [MRNA] OF 671-748</scope>
    <source>
        <strain>Sprague-Dawley</strain>
        <tissue>Liver</tissue>
    </source>
</reference>
<reference key="5">
    <citation type="journal article" date="2000" name="Biochim. Biophys. Acta">
        <title>Structure at 1.44 A resolution of an N-terminally truncated form of the rat serum complement C3d fragment.</title>
        <authorList>
            <person name="Zanotti G."/>
            <person name="Bassetto A."/>
            <person name="Battistutta R."/>
            <person name="Folli C."/>
            <person name="Arcidiaco P."/>
            <person name="Stoppini M."/>
            <person name="Berni R."/>
        </authorList>
    </citation>
    <scope>PROTEIN SEQUENCE OF 960-969</scope>
    <scope>X-RAY CRYSTALLOGRAPHY (1.44 ANGSTROMS) OF 1010-1286</scope>
</reference>
<reference key="6">
    <citation type="journal article" date="1989" name="J. Biol. Chem.">
        <title>Estrogen regulation of tissue-specific expression of complement C3.</title>
        <authorList>
            <person name="Sundstrom S.A."/>
            <person name="Komm B.S."/>
            <person name="Ponce-De-Leon H."/>
            <person name="Yi Z."/>
            <person name="Teuscher C."/>
            <person name="Lyttle C.R."/>
        </authorList>
    </citation>
    <scope>NUCLEOTIDE SEQUENCE [MRNA] OF 1316-1595</scope>
</reference>
<reference key="7">
    <citation type="journal article" date="2012" name="Nat. Commun.">
        <title>Quantitative maps of protein phosphorylation sites across 14 different rat organs and tissues.</title>
        <authorList>
            <person name="Lundby A."/>
            <person name="Secher A."/>
            <person name="Lage K."/>
            <person name="Nordsborg N.B."/>
            <person name="Dmytriyev A."/>
            <person name="Lundby C."/>
            <person name="Olsen J.V."/>
        </authorList>
    </citation>
    <scope>PHOSPHORYLATION [LARGE SCALE ANALYSIS] AT SER-671</scope>
    <scope>IDENTIFICATION BY MASS SPECTROMETRY [LARGE SCALE ANALYSIS]</scope>
</reference>
<accession>P01026</accession>
<accession>Q9ET19</accession>
<accession>Q9QV57</accession>
<accession>Q9QV58</accession>
<gene>
    <name type="primary">C3</name>
</gene>
<comment type="function">
    <text evidence="6">Precursor of non-enzymatic components of the classical, alternative, lectin and GZMK complement pathways, which consist in a cascade of proteins that leads to phagocytosis and breakdown of pathogens and signaling that strengthens the adaptive immune system.</text>
</comment>
<comment type="function">
    <molecule>Complement C3b</molecule>
    <text evidence="1">Non-enzymatic component of C5 convertase. Generated following cleavage by C3 convertase, it covalently attaches to the surface of pathogens, where it acts as an opsonin that marks the surface of antigens for removal. Complement C3b binds covalently via its reactive thioester, to cell surface carbohydrates or immune aggregates. Together with complement C4b, it then recruits the serine protease complement C2b to form the C5 convertase, which cleaves and activate C5, the next component of the complement pathways. In the alternative complement pathway, recruits the serine protease CFB to form the C5 convertase that cleaves and activates C5.</text>
</comment>
<comment type="function">
    <molecule>C3a anaphylatoxin</molecule>
    <text evidence="1 6">Mediator of local inflammatory process released following cleavage by C3 convertase (By similarity). Acts by binding to its receptor, C3AR1, activating G protein-coupled receptor signaling, promoting the phosphorylation, ARRB2-mediated internalization and endocytosis of C3AR1 (By similarity). C3a anaphylatoxin stimulates the activation of immune cells such as mast cells and basophilic leukocytes to release inflammation agents, such as cytokines, chemokines and histamine, which promote inflammation development (By similarity). Also acts as potent chemoattractant for the migration of macrophages and neutrophils to the inflamed tissues, resulting in neutralization of the inflammatory triggers by multiple ways, such as phagocytosis and generation of reactive oxidants (PubMed:8352775).</text>
</comment>
<comment type="function">
    <molecule>Acylation stimulating protein</molecule>
    <text evidence="1">Adipogenic hormone that stimulates triglyceride synthesis and glucose transport in adipocytes, regulating fat storage and playing a role in postprandial triglyceride clearance. Appears to stimulate triglyceride synthesis via activation of the PLC, MAPK and AKT signaling pathways. Acts by binding to its receptor, C5AR2, activating G protein-coupled receptor signaling, promoting the phosphorylation, ARRB2-mediated internalization and endocytosis of C5AR2.</text>
</comment>
<comment type="function">
    <molecule>C3-beta-c</molecule>
    <text evidence="6">Acts as a chemoattractant for neutrophils in chronic inflammation.</text>
</comment>
<comment type="activity regulation">
    <text evidence="1">Complement activation is inhibited by VSIG4.</text>
</comment>
<comment type="subunit">
    <text evidence="1">In absence of complement activation, the C3 precursor is first processed by the removal of 4 Arg residues, forming two chains, beta and alpha, linked by a disulfide bond.</text>
</comment>
<comment type="subunit">
    <molecule>Complement C3b</molecule>
    <text evidence="1">Complement C3b is composed of complement C3b and complement C3 beta chains that are associated via disulfide bonds. Non-enzymatic component of the C5 convertase, also named C4bC2bC3b, composed of the serine protease complement C2b (C2), complement C3b, as well as complement C4b (C4). Non-enzymatic component of the C5 convertase of the alternative complement pathways composed of the serine protease complement CFB and complement C3b. Interacts with CFP; interaction takes place together with CFB in the alternative complement system and allows the complex to become active. Interacts with CR1 (via Sushi 8 and Sushi 9 domains). Interacts with CFH.</text>
</comment>
<comment type="subunit">
    <molecule>Complement C3d fragment</molecule>
    <text evidence="1">Interacts with CFH. Interacts with CR2.</text>
</comment>
<comment type="subunit">
    <molecule>Complement C3dg fragment</molecule>
    <text evidence="1">During pregnancy, C3dg exists as a complex (probably a 2:2:2 heterohexamer) with AGT and the proform of PRG2. Interacts with CR2 (via the N-terminal Sushi domains 1 and 2).</text>
</comment>
<comment type="subcellular location">
    <subcellularLocation>
        <location evidence="1">Secreted</location>
    </subcellularLocation>
</comment>
<comment type="subcellular location">
    <molecule>Complement C3b</molecule>
    <subcellularLocation>
        <location evidence="1">Secreted</location>
    </subcellularLocation>
    <subcellularLocation>
        <location evidence="1">Cell surface</location>
    </subcellularLocation>
    <text evidence="1">Covalently associated with the surface of pathogens: the internal thioester bond reacts with carbohydrate antigens on the target surface to form amide or ester bonds.</text>
</comment>
<comment type="subcellular location">
    <molecule>C3a anaphylatoxin</molecule>
    <subcellularLocation>
        <location evidence="5">Secreted</location>
    </subcellularLocation>
</comment>
<comment type="PTM">
    <text evidence="1">C3 precursor is first processed by the removal of 4 Arg residues, forming two chains, beta and alpha, linked by a disulfide bond. During activation of the complement systems, the alpha chain is cleaved into C3a and C3b by the C3 convertase: C3b stays linked to the beta chain, while C3a is released in the plasma. The alpha chain is cleaved by the serine protease complement C2b component of the C3 convertase to generate C3a and C3b following activation by the classical, lectin and GZMK complement systems. The alpha chain is cleaved by CFB component of the C3 convertase to generate C3a and C3b following activation by the alternative complement system.</text>
</comment>
<comment type="PTM">
    <molecule>C3a anaphylatoxin</molecule>
    <text evidence="1">C3a is further processed by carboxypeptidases to release the C-terminal arginine residue generating the acylation stimulating protein (ASP). Levels of ASP are increased in adipocytes in the postprandial period and by insulin and dietary chylomicrons.</text>
</comment>
<comment type="PTM">
    <molecule>Complement C3b</molecule>
    <text evidence="1">Complement C3b is rapidly split in two positions by factor I (CFI) and a cofactor (CFH) to form iC3b (inactivated C3b) and C3f which is released. CFI and CFH catalyze proteolytic degradation of already-deposited complement C3b. Then iC3b is slowly cleaved (possibly by CFI) to form C3c (beta chain + alpha' chain fragment 1 + alpha' chain fragment 2), C3dg and C3f. Other proteases produce other fragments such as C3d or C3g.</text>
</comment>
<comment type="PTM">
    <molecule>Complement C3b</molecule>
    <text evidence="1">Upon activation, the internal thioester bond reacts with carbohydrate antigens on the target surface to form amide or ester bonds, leading to covalent association with the surface of pathogens.</text>
</comment>
<comment type="PTM">
    <molecule>Complement C3b</molecule>
    <text evidence="1">Complement C3b interacts with complement C4b via a thioester linkage.</text>
</comment>
<comment type="PTM">
    <text evidence="1">Phosphorylated by FAM20C in the extracellular medium.</text>
</comment>
<protein>
    <recommendedName>
        <fullName>Complement C3</fullName>
    </recommendedName>
    <component>
        <recommendedName>
            <fullName>Complement C3 beta chain</fullName>
        </recommendedName>
    </component>
    <component>
        <recommendedName>
            <fullName>C3-beta-c</fullName>
            <shortName>C3bc</shortName>
        </recommendedName>
        <alternativeName>
            <fullName>Neutrophil chemotactic factor-2</fullName>
            <shortName>ENCF-2</shortName>
        </alternativeName>
    </component>
    <component>
        <recommendedName>
            <fullName>Complement C3 alpha chain</fullName>
        </recommendedName>
    </component>
    <component>
        <recommendedName>
            <fullName>C3a anaphylatoxin</fullName>
        </recommendedName>
        <alternativeName>
            <fullName>Neutrophil chemotactic factor-1</fullName>
            <shortName>ENCF-1</shortName>
        </alternativeName>
    </component>
    <component>
        <recommendedName>
            <fullName>Acylation stimulating protein</fullName>
            <shortName>ASP</shortName>
        </recommendedName>
        <alternativeName>
            <fullName>C3adesArg</fullName>
        </alternativeName>
    </component>
    <component>
        <recommendedName>
            <fullName>Complement C3b</fullName>
        </recommendedName>
        <alternativeName>
            <fullName>Complement C3b-alpha' chain</fullName>
        </alternativeName>
    </component>
    <component>
        <recommendedName>
            <fullName>Complement C3c alpha' chain fragment 1</fullName>
        </recommendedName>
    </component>
    <component>
        <recommendedName>
            <fullName>Complement C3dg fragment</fullName>
        </recommendedName>
    </component>
    <component>
        <recommendedName>
            <fullName>Complement C3g fragment</fullName>
        </recommendedName>
    </component>
    <component>
        <recommendedName>
            <fullName>Complement C3d fragment</fullName>
        </recommendedName>
    </component>
    <component>
        <recommendedName>
            <fullName>Complement C3f fragment</fullName>
        </recommendedName>
    </component>
    <component>
        <recommendedName>
            <fullName>Complement C3c alpha' chain fragment 2</fullName>
        </recommendedName>
    </component>
</protein>
<sequence length="1663" mass="186460">MGPTSGSQLLVLLLLLASSLLALGSPMYSIITPNVLRLESEETFILEAHDAQGDVPVTVTVQDFLKKQVLTSEKTVLTGATGHLNRVFIKIPASKEFNADKGHKYVTVVANFGATVVEKAVLVSFQSGYLFIQTDKTIYTPGSTVFYRIFTVDNNLLPVGKTVVIVIETPDGVPIKRDILSSHNQYGILPLSWNIPELVNMGQWKIRAFYEHAPKQTFSAEFEVKEYVLPSFEVLVEPTEKFYYIHGPKGLEVSITARFLYGKNVDGTAFVIFGVQDEDKKISLALSLTRVLIEDGSGEAVLSRKVLMDGVRPSSPEALVGKSLYVSVTVILHSGSDMVEAERSGIPIVTSPYQIHFTKTPKFFKPAMPFDLMVFVTNPDGSPARRVPVVTQGSDAQALTQDDGVAKLSVNTPNNRQPLTITVSTKKEGIPDARQATRTMQAQPYSTMHNSNNYLHLSVSRVELKPGDNLNVNFHLRTDAGQEAKIRYYTYLVMNKGKLLKAGRQVREPGQDLVVLSLPITPEFIPSFRLVAYYTLIGANGQREVVADSVWVDVKDSCVGTLVVKGDPRDNRQPAPGHQTTLRIEGNQGARVGLVAVDKGVFVLNKKNKLTQSKIWDVVEKADIGCTPGSGKNYAGVFMDAGLTFKTNQGLQTDQREDPECAKPAARRRRSVQLMERRMDKAGQYTDKGLRKCCEDGMRDIPMPYSCQRRARLITQGESCLKAFMDCCNYITKLREQHRRDHVLGLARSDVDEDIIPEEDIISRSHFPESWLWTIEELKEPEKNGISTKVMNIFLKDSITTWEILAVSLSDKKGICVADPYEITVMQDFFIDLRLPYSVVRNEQVEIRAVLFNYREQEKLKVRVELLHNPAFCSMATAKKRYYQTIEIPPKSSVAVPYVIVPLKIGLQEVEVKAAVFNHFISDGVKKILKVVPEGMRVNKTVAVRTLDPEHLNQGGVQREDVNAADLSDQVPDTDSETRILLQGTPVAQMAEDAVDGERLKHLIVTPSGCGEQNMIGMTPTVIAVHYLDQTEQWEKFGLEKRQEALELIKKGYTQQLAFKQPISAYAAFNNRPPSTWLTAMWSRSFSLAANLIAIDSQVLCGAVKWLILEKQKPDGVFQEDGPVIHQEMIGGFRNTKEADVSLTAFVLIALQEARDICEGQVNSLPGSINKAGEYLEASYLNLQRPYTVAIAGYALALMNKLEEPYLTKFLNTAKDRNRWEEPGQQLYNVEATSYALLALLLLKDFDSVPPVVRWLNDERYYGGGYGSTQATFMVFQALAQYRADVPDHKDLNMDVSLHLPSRSSPTVFRLLWESGSLLRSEETKQNEGFSLTAKGKGQGTLSVVTVYHAKVKGKTTCKKFDLRVTIKPAPETAKKPQDAKSSMILDICTRYLGDVDATMSILDISMMTGFIPDTNDLELLSSGVDRYISKYEMDKAFSNKNTLIIYLEKISHSEEDCLSFKVHQFFNVGLIQPGSVKVYSYYNLEESCTRFYHPEKDDGMLSKLCHNEMCRCAEENCFMHQSQDQVSLNERLDKACEPGVDYVYKTKLTTIELSDDFDEYIMTIEQVIKSGSDEVQAGQERRFISHVKCRNALKLQKGKQYLMWGLSSDLWGEKPNTSYIIGKDTWVEHWPEAEERQDQKNQKQCEDLGAFTETMVVFGCPN</sequence>
<dbReference type="EMBL" id="X52477">
    <property type="protein sequence ID" value="CAA36716.1"/>
    <property type="molecule type" value="mRNA"/>
</dbReference>
<dbReference type="EMBL" id="AF286158">
    <property type="protein sequence ID" value="AAG00532.1"/>
    <property type="molecule type" value="mRNA"/>
</dbReference>
<dbReference type="EMBL" id="M29866">
    <property type="protein sequence ID" value="AAA40837.1"/>
    <property type="molecule type" value="mRNA"/>
</dbReference>
<dbReference type="PIR" id="S15764">
    <property type="entry name" value="C3RT"/>
</dbReference>
<dbReference type="RefSeq" id="NP_058690.2">
    <property type="nucleotide sequence ID" value="NM_016994.2"/>
</dbReference>
<dbReference type="PDB" id="1QQF">
    <property type="method" value="X-ray"/>
    <property type="resolution" value="1.45 A"/>
    <property type="chains" value="A=1010-1286"/>
</dbReference>
<dbReference type="PDB" id="1QSJ">
    <property type="method" value="X-ray"/>
    <property type="resolution" value="1.90 A"/>
    <property type="chains" value="A/B/C/D=1010-1286"/>
</dbReference>
<dbReference type="PDBsum" id="1QQF"/>
<dbReference type="PDBsum" id="1QSJ"/>
<dbReference type="SMR" id="P01026"/>
<dbReference type="BioGRID" id="246419">
    <property type="interactions" value="3"/>
</dbReference>
<dbReference type="FunCoup" id="P01026">
    <property type="interactions" value="608"/>
</dbReference>
<dbReference type="IntAct" id="P01026">
    <property type="interactions" value="1"/>
</dbReference>
<dbReference type="MINT" id="P01026"/>
<dbReference type="STRING" id="10116.ENSRNOP00000066885"/>
<dbReference type="MEROPS" id="I39.950"/>
<dbReference type="CarbonylDB" id="P01026"/>
<dbReference type="GlyCosmos" id="P01026">
    <property type="glycosylation" value="2 sites, No reported glycans"/>
</dbReference>
<dbReference type="GlyGen" id="P01026">
    <property type="glycosylation" value="4 sites"/>
</dbReference>
<dbReference type="iPTMnet" id="P01026"/>
<dbReference type="PhosphoSitePlus" id="P01026"/>
<dbReference type="jPOST" id="P01026"/>
<dbReference type="PaxDb" id="10116-ENSRNOP00000066885"/>
<dbReference type="GeneID" id="24232"/>
<dbReference type="KEGG" id="rno:24232"/>
<dbReference type="AGR" id="RGD:2232"/>
<dbReference type="CTD" id="718"/>
<dbReference type="RGD" id="2232">
    <property type="gene designation" value="C3"/>
</dbReference>
<dbReference type="eggNOG" id="KOG1366">
    <property type="taxonomic scope" value="Eukaryota"/>
</dbReference>
<dbReference type="InParanoid" id="P01026"/>
<dbReference type="OrthoDB" id="6359008at2759"/>
<dbReference type="PhylomeDB" id="P01026"/>
<dbReference type="Reactome" id="R-RNO-173736">
    <property type="pathway name" value="Alternative complement activation"/>
</dbReference>
<dbReference type="Reactome" id="R-RNO-174577">
    <property type="pathway name" value="Activation of C3 and C5"/>
</dbReference>
<dbReference type="Reactome" id="R-RNO-198933">
    <property type="pathway name" value="Immunoregulatory interactions between a Lymphoid and a non-Lymphoid cell"/>
</dbReference>
<dbReference type="Reactome" id="R-RNO-375276">
    <property type="pathway name" value="Peptide ligand-binding receptors"/>
</dbReference>
<dbReference type="Reactome" id="R-RNO-381426">
    <property type="pathway name" value="Regulation of Insulin-like Growth Factor (IGF) transport and uptake by Insulin-like Growth Factor Binding Proteins (IGFBPs)"/>
</dbReference>
<dbReference type="Reactome" id="R-RNO-418594">
    <property type="pathway name" value="G alpha (i) signalling events"/>
</dbReference>
<dbReference type="Reactome" id="R-RNO-6798695">
    <property type="pathway name" value="Neutrophil degranulation"/>
</dbReference>
<dbReference type="Reactome" id="R-RNO-8957275">
    <property type="pathway name" value="Post-translational protein phosphorylation"/>
</dbReference>
<dbReference type="Reactome" id="R-RNO-977606">
    <property type="pathway name" value="Regulation of Complement cascade"/>
</dbReference>
<dbReference type="EvolutionaryTrace" id="P01026"/>
<dbReference type="PRO" id="PR:P01026"/>
<dbReference type="Proteomes" id="UP000002494">
    <property type="component" value="Unplaced"/>
</dbReference>
<dbReference type="GO" id="GO:0009986">
    <property type="term" value="C:cell surface"/>
    <property type="evidence" value="ECO:0000266"/>
    <property type="project" value="RGD"/>
</dbReference>
<dbReference type="GO" id="GO:0005576">
    <property type="term" value="C:extracellular region"/>
    <property type="evidence" value="ECO:0000266"/>
    <property type="project" value="RGD"/>
</dbReference>
<dbReference type="GO" id="GO:0005615">
    <property type="term" value="C:extracellular space"/>
    <property type="evidence" value="ECO:0000314"/>
    <property type="project" value="RGD"/>
</dbReference>
<dbReference type="GO" id="GO:0032991">
    <property type="term" value="C:protein-containing complex"/>
    <property type="evidence" value="ECO:0000266"/>
    <property type="project" value="RGD"/>
</dbReference>
<dbReference type="GO" id="GO:0031715">
    <property type="term" value="F:C5L2 anaphylatoxin chemotactic receptor binding"/>
    <property type="evidence" value="ECO:0000250"/>
    <property type="project" value="UniProtKB"/>
</dbReference>
<dbReference type="GO" id="GO:0004866">
    <property type="term" value="F:endopeptidase inhibitor activity"/>
    <property type="evidence" value="ECO:0007669"/>
    <property type="project" value="InterPro"/>
</dbReference>
<dbReference type="GO" id="GO:0008289">
    <property type="term" value="F:lipid binding"/>
    <property type="evidence" value="ECO:0000314"/>
    <property type="project" value="RGD"/>
</dbReference>
<dbReference type="GO" id="GO:0048018">
    <property type="term" value="F:receptor ligand activity"/>
    <property type="evidence" value="ECO:0000266"/>
    <property type="project" value="RGD"/>
</dbReference>
<dbReference type="GO" id="GO:0097242">
    <property type="term" value="P:amyloid-beta clearance"/>
    <property type="evidence" value="ECO:0000266"/>
    <property type="project" value="RGD"/>
</dbReference>
<dbReference type="GO" id="GO:0042113">
    <property type="term" value="P:B cell activation"/>
    <property type="evidence" value="ECO:0000266"/>
    <property type="project" value="RGD"/>
</dbReference>
<dbReference type="GO" id="GO:0006935">
    <property type="term" value="P:chemotaxis"/>
    <property type="evidence" value="ECO:0007669"/>
    <property type="project" value="UniProtKB-KW"/>
</dbReference>
<dbReference type="GO" id="GO:0006956">
    <property type="term" value="P:complement activation"/>
    <property type="evidence" value="ECO:0000314"/>
    <property type="project" value="RGD"/>
</dbReference>
<dbReference type="GO" id="GO:0006957">
    <property type="term" value="P:complement activation, alternative pathway"/>
    <property type="evidence" value="ECO:0007669"/>
    <property type="project" value="UniProtKB-KW"/>
</dbReference>
<dbReference type="GO" id="GO:0006958">
    <property type="term" value="P:complement activation, classical pathway"/>
    <property type="evidence" value="ECO:0000304"/>
    <property type="project" value="RGD"/>
</dbReference>
<dbReference type="GO" id="GO:0002430">
    <property type="term" value="P:complement receptor mediated signaling pathway"/>
    <property type="evidence" value="ECO:0000266"/>
    <property type="project" value="RGD"/>
</dbReference>
<dbReference type="GO" id="GO:0097278">
    <property type="term" value="P:complement-dependent cytotoxicity"/>
    <property type="evidence" value="ECO:0000266"/>
    <property type="project" value="RGD"/>
</dbReference>
<dbReference type="GO" id="GO:0150062">
    <property type="term" value="P:complement-mediated synapse pruning"/>
    <property type="evidence" value="ECO:0000266"/>
    <property type="project" value="RGD"/>
</dbReference>
<dbReference type="GO" id="GO:0006631">
    <property type="term" value="P:fatty acid metabolic process"/>
    <property type="evidence" value="ECO:0007669"/>
    <property type="project" value="UniProtKB-KW"/>
</dbReference>
<dbReference type="GO" id="GO:0006954">
    <property type="term" value="P:inflammatory response"/>
    <property type="evidence" value="ECO:0007669"/>
    <property type="project" value="UniProtKB-KW"/>
</dbReference>
<dbReference type="GO" id="GO:0045087">
    <property type="term" value="P:innate immune response"/>
    <property type="evidence" value="ECO:0000266"/>
    <property type="project" value="RGD"/>
</dbReference>
<dbReference type="GO" id="GO:0060384">
    <property type="term" value="P:innervation"/>
    <property type="evidence" value="ECO:0000270"/>
    <property type="project" value="RGD"/>
</dbReference>
<dbReference type="GO" id="GO:0016322">
    <property type="term" value="P:neuron remodeling"/>
    <property type="evidence" value="ECO:0000266"/>
    <property type="project" value="RGD"/>
</dbReference>
<dbReference type="GO" id="GO:0035846">
    <property type="term" value="P:oviduct epithelium development"/>
    <property type="evidence" value="ECO:0000266"/>
    <property type="project" value="RGD"/>
</dbReference>
<dbReference type="GO" id="GO:0001970">
    <property type="term" value="P:positive regulation of activation of membrane attack complex"/>
    <property type="evidence" value="ECO:0000266"/>
    <property type="project" value="RGD"/>
</dbReference>
<dbReference type="GO" id="GO:0045766">
    <property type="term" value="P:positive regulation of angiogenesis"/>
    <property type="evidence" value="ECO:0000266"/>
    <property type="project" value="RGD"/>
</dbReference>
<dbReference type="GO" id="GO:2000427">
    <property type="term" value="P:positive regulation of apoptotic cell clearance"/>
    <property type="evidence" value="ECO:0000266"/>
    <property type="project" value="RGD"/>
</dbReference>
<dbReference type="GO" id="GO:0010828">
    <property type="term" value="P:positive regulation of D-glucose transmembrane transport"/>
    <property type="evidence" value="ECO:0000250"/>
    <property type="project" value="UniProtKB"/>
</dbReference>
<dbReference type="GO" id="GO:0048639">
    <property type="term" value="P:positive regulation of developmental growth"/>
    <property type="evidence" value="ECO:0000314"/>
    <property type="project" value="RGD"/>
</dbReference>
<dbReference type="GO" id="GO:0070374">
    <property type="term" value="P:positive regulation of ERK1 and ERK2 cascade"/>
    <property type="evidence" value="ECO:0000314"/>
    <property type="project" value="RGD"/>
</dbReference>
<dbReference type="GO" id="GO:0045745">
    <property type="term" value="P:positive regulation of G protein-coupled receptor signaling pathway"/>
    <property type="evidence" value="ECO:0000250"/>
    <property type="project" value="UniProtKB"/>
</dbReference>
<dbReference type="GO" id="GO:0010884">
    <property type="term" value="P:positive regulation of lipid storage"/>
    <property type="evidence" value="ECO:0000250"/>
    <property type="project" value="UniProtKB"/>
</dbReference>
<dbReference type="GO" id="GO:0050766">
    <property type="term" value="P:positive regulation of phagocytosis"/>
    <property type="evidence" value="ECO:0000266"/>
    <property type="project" value="RGD"/>
</dbReference>
<dbReference type="GO" id="GO:0060100">
    <property type="term" value="P:positive regulation of phagocytosis, engulfment"/>
    <property type="evidence" value="ECO:0000266"/>
    <property type="project" value="RGD"/>
</dbReference>
<dbReference type="GO" id="GO:0001934">
    <property type="term" value="P:positive regulation of protein phosphorylation"/>
    <property type="evidence" value="ECO:0000250"/>
    <property type="project" value="UniProtKB"/>
</dbReference>
<dbReference type="GO" id="GO:0048260">
    <property type="term" value="P:positive regulation of receptor-mediated endocytosis"/>
    <property type="evidence" value="ECO:0000266"/>
    <property type="project" value="RGD"/>
</dbReference>
<dbReference type="GO" id="GO:0001798">
    <property type="term" value="P:positive regulation of type IIa hypersensitivity"/>
    <property type="evidence" value="ECO:0000266"/>
    <property type="project" value="RGD"/>
</dbReference>
<dbReference type="GO" id="GO:0010575">
    <property type="term" value="P:positive regulation of vascular endothelial growth factor production"/>
    <property type="evidence" value="ECO:0000266"/>
    <property type="project" value="RGD"/>
</dbReference>
<dbReference type="GO" id="GO:0010866">
    <property type="term" value="P:regulation of triglyceride biosynthetic process"/>
    <property type="evidence" value="ECO:0000250"/>
    <property type="project" value="UniProtKB"/>
</dbReference>
<dbReference type="GO" id="GO:0009617">
    <property type="term" value="P:response to bacterium"/>
    <property type="evidence" value="ECO:0000266"/>
    <property type="project" value="RGD"/>
</dbReference>
<dbReference type="GO" id="GO:0032355">
    <property type="term" value="P:response to estradiol"/>
    <property type="evidence" value="ECO:0000270"/>
    <property type="project" value="RGD"/>
</dbReference>
<dbReference type="GO" id="GO:0043627">
    <property type="term" value="P:response to estrogen"/>
    <property type="evidence" value="ECO:0000270"/>
    <property type="project" value="RGD"/>
</dbReference>
<dbReference type="GO" id="GO:0051384">
    <property type="term" value="P:response to glucocorticoid"/>
    <property type="evidence" value="ECO:0000270"/>
    <property type="project" value="RGD"/>
</dbReference>
<dbReference type="GO" id="GO:0032026">
    <property type="term" value="P:response to magnesium ion"/>
    <property type="evidence" value="ECO:0000270"/>
    <property type="project" value="RGD"/>
</dbReference>
<dbReference type="GO" id="GO:0032570">
    <property type="term" value="P:response to progesterone"/>
    <property type="evidence" value="ECO:0000270"/>
    <property type="project" value="RGD"/>
</dbReference>
<dbReference type="GO" id="GO:0009410">
    <property type="term" value="P:response to xenobiotic stimulus"/>
    <property type="evidence" value="ECO:0000270"/>
    <property type="project" value="RGD"/>
</dbReference>
<dbReference type="GO" id="GO:0060041">
    <property type="term" value="P:retina development in camera-type eye"/>
    <property type="evidence" value="ECO:0000266"/>
    <property type="project" value="RGD"/>
</dbReference>
<dbReference type="GO" id="GO:0002507">
    <property type="term" value="P:tolerance induction"/>
    <property type="evidence" value="ECO:0000270"/>
    <property type="project" value="RGD"/>
</dbReference>
<dbReference type="GO" id="GO:0035886">
    <property type="term" value="P:vascular associated smooth muscle cell differentiation"/>
    <property type="evidence" value="ECO:0000266"/>
    <property type="project" value="RGD"/>
</dbReference>
<dbReference type="GO" id="GO:0150064">
    <property type="term" value="P:vertebrate eye-specific patterning"/>
    <property type="evidence" value="ECO:0000266"/>
    <property type="project" value="RGD"/>
</dbReference>
<dbReference type="CDD" id="cd00017">
    <property type="entry name" value="ANATO"/>
    <property type="match status" value="1"/>
</dbReference>
<dbReference type="CDD" id="cd02896">
    <property type="entry name" value="complement_C3_C4_C5"/>
    <property type="match status" value="1"/>
</dbReference>
<dbReference type="CDD" id="cd03583">
    <property type="entry name" value="NTR_complement_C3"/>
    <property type="match status" value="1"/>
</dbReference>
<dbReference type="FunFam" id="1.20.91.20:FF:000001">
    <property type="entry name" value="Complement C3"/>
    <property type="match status" value="1"/>
</dbReference>
<dbReference type="FunFam" id="1.50.10.20:FF:000008">
    <property type="entry name" value="Complement C3"/>
    <property type="match status" value="1"/>
</dbReference>
<dbReference type="FunFam" id="2.20.130.20:FF:000001">
    <property type="entry name" value="Complement C3"/>
    <property type="match status" value="1"/>
</dbReference>
<dbReference type="FunFam" id="2.40.50.120:FF:000013">
    <property type="entry name" value="Complement C3"/>
    <property type="match status" value="1"/>
</dbReference>
<dbReference type="FunFam" id="2.60.40.10:FF:001013">
    <property type="entry name" value="Complement C3"/>
    <property type="match status" value="1"/>
</dbReference>
<dbReference type="FunFam" id="2.60.40.1930:FF:000006">
    <property type="entry name" value="Complement C3"/>
    <property type="match status" value="1"/>
</dbReference>
<dbReference type="FunFam" id="2.60.40.1930:FF:000008">
    <property type="entry name" value="Complement C3"/>
    <property type="match status" value="1"/>
</dbReference>
<dbReference type="FunFam" id="2.60.40.690:FF:000004">
    <property type="entry name" value="Complement C3"/>
    <property type="match status" value="1"/>
</dbReference>
<dbReference type="FunFam" id="6.20.50.160:FF:000003">
    <property type="entry name" value="Complement C3"/>
    <property type="match status" value="1"/>
</dbReference>
<dbReference type="FunFam" id="2.60.40.10:FF:000155">
    <property type="entry name" value="complement C3 isoform X1"/>
    <property type="match status" value="1"/>
</dbReference>
<dbReference type="FunFam" id="2.60.40.1940:FF:000001">
    <property type="entry name" value="Complement component C3"/>
    <property type="match status" value="1"/>
</dbReference>
<dbReference type="Gene3D" id="1.50.10.20">
    <property type="match status" value="1"/>
</dbReference>
<dbReference type="Gene3D" id="2.20.130.20">
    <property type="match status" value="1"/>
</dbReference>
<dbReference type="Gene3D" id="2.40.50.120">
    <property type="match status" value="1"/>
</dbReference>
<dbReference type="Gene3D" id="2.60.120.1540">
    <property type="match status" value="1"/>
</dbReference>
<dbReference type="Gene3D" id="2.60.40.1930">
    <property type="match status" value="3"/>
</dbReference>
<dbReference type="Gene3D" id="2.60.40.1940">
    <property type="match status" value="1"/>
</dbReference>
<dbReference type="Gene3D" id="6.20.50.160">
    <property type="match status" value="1"/>
</dbReference>
<dbReference type="Gene3D" id="2.60.40.690">
    <property type="entry name" value="Alpha-macroglobulin, receptor-binding domain"/>
    <property type="match status" value="1"/>
</dbReference>
<dbReference type="Gene3D" id="1.20.91.20">
    <property type="entry name" value="Anaphylotoxins (complement system)"/>
    <property type="match status" value="1"/>
</dbReference>
<dbReference type="Gene3D" id="2.60.40.10">
    <property type="entry name" value="Immunoglobulins"/>
    <property type="match status" value="2"/>
</dbReference>
<dbReference type="InterPro" id="IPR009048">
    <property type="entry name" value="A-macroglobulin_rcpt-bd"/>
</dbReference>
<dbReference type="InterPro" id="IPR036595">
    <property type="entry name" value="A-macroglobulin_rcpt-bd_sf"/>
</dbReference>
<dbReference type="InterPro" id="IPR050473">
    <property type="entry name" value="A2M/Complement_sys"/>
</dbReference>
<dbReference type="InterPro" id="IPR011625">
    <property type="entry name" value="A2M_N_BRD"/>
</dbReference>
<dbReference type="InterPro" id="IPR047565">
    <property type="entry name" value="Alpha-macroglob_thiol-ester_cl"/>
</dbReference>
<dbReference type="InterPro" id="IPR011626">
    <property type="entry name" value="Alpha-macroglobulin_TED"/>
</dbReference>
<dbReference type="InterPro" id="IPR000020">
    <property type="entry name" value="Anaphylatoxin/fibulin"/>
</dbReference>
<dbReference type="InterPro" id="IPR018081">
    <property type="entry name" value="Anaphylatoxin_comp_syst"/>
</dbReference>
<dbReference type="InterPro" id="IPR001840">
    <property type="entry name" value="Anaphylatoxn_comp_syst_dom"/>
</dbReference>
<dbReference type="InterPro" id="IPR041425">
    <property type="entry name" value="C3/4/5_MG1"/>
</dbReference>
<dbReference type="InterPro" id="IPR049466">
    <property type="entry name" value="C3_CUB1"/>
</dbReference>
<dbReference type="InterPro" id="IPR048848">
    <property type="entry name" value="C3_CUB2"/>
</dbReference>
<dbReference type="InterPro" id="IPR013783">
    <property type="entry name" value="Ig-like_fold"/>
</dbReference>
<dbReference type="InterPro" id="IPR001599">
    <property type="entry name" value="Macroglobln_a2"/>
</dbReference>
<dbReference type="InterPro" id="IPR019742">
    <property type="entry name" value="MacrogloblnA2_CS"/>
</dbReference>
<dbReference type="InterPro" id="IPR002890">
    <property type="entry name" value="MG2"/>
</dbReference>
<dbReference type="InterPro" id="IPR041555">
    <property type="entry name" value="MG3"/>
</dbReference>
<dbReference type="InterPro" id="IPR040839">
    <property type="entry name" value="MG4"/>
</dbReference>
<dbReference type="InterPro" id="IPR001134">
    <property type="entry name" value="Netrin_domain"/>
</dbReference>
<dbReference type="InterPro" id="IPR018933">
    <property type="entry name" value="Netrin_module_non-TIMP"/>
</dbReference>
<dbReference type="InterPro" id="IPR035815">
    <property type="entry name" value="NTR_complement_C3"/>
</dbReference>
<dbReference type="InterPro" id="IPR008930">
    <property type="entry name" value="Terpenoid_cyclase/PrenylTrfase"/>
</dbReference>
<dbReference type="InterPro" id="IPR008993">
    <property type="entry name" value="TIMP-like_OB-fold"/>
</dbReference>
<dbReference type="PANTHER" id="PTHR11412:SF81">
    <property type="entry name" value="COMPLEMENT C3"/>
    <property type="match status" value="1"/>
</dbReference>
<dbReference type="PANTHER" id="PTHR11412">
    <property type="entry name" value="MACROGLOBULIN / COMPLEMENT"/>
    <property type="match status" value="1"/>
</dbReference>
<dbReference type="Pfam" id="PF00207">
    <property type="entry name" value="A2M"/>
    <property type="match status" value="1"/>
</dbReference>
<dbReference type="Pfam" id="PF07703">
    <property type="entry name" value="A2M_BRD"/>
    <property type="match status" value="1"/>
</dbReference>
<dbReference type="Pfam" id="PF07677">
    <property type="entry name" value="A2M_recep"/>
    <property type="match status" value="1"/>
</dbReference>
<dbReference type="Pfam" id="PF01821">
    <property type="entry name" value="ANATO"/>
    <property type="match status" value="1"/>
</dbReference>
<dbReference type="Pfam" id="PF21406">
    <property type="entry name" value="C3_CUB1"/>
    <property type="match status" value="1"/>
</dbReference>
<dbReference type="Pfam" id="PF21308">
    <property type="entry name" value="C3_CUB2"/>
    <property type="match status" value="1"/>
</dbReference>
<dbReference type="Pfam" id="PF17790">
    <property type="entry name" value="MG1"/>
    <property type="match status" value="1"/>
</dbReference>
<dbReference type="Pfam" id="PF01835">
    <property type="entry name" value="MG2"/>
    <property type="match status" value="1"/>
</dbReference>
<dbReference type="Pfam" id="PF17791">
    <property type="entry name" value="MG3"/>
    <property type="match status" value="1"/>
</dbReference>
<dbReference type="Pfam" id="PF17789">
    <property type="entry name" value="MG4"/>
    <property type="match status" value="1"/>
</dbReference>
<dbReference type="Pfam" id="PF01759">
    <property type="entry name" value="NTR"/>
    <property type="match status" value="1"/>
</dbReference>
<dbReference type="Pfam" id="PF07678">
    <property type="entry name" value="TED_complement"/>
    <property type="match status" value="1"/>
</dbReference>
<dbReference type="PRINTS" id="PR00004">
    <property type="entry name" value="ANAPHYLATOXN"/>
</dbReference>
<dbReference type="SFLD" id="SFLDG01179">
    <property type="entry name" value="Complement_C3/C4_Like"/>
    <property type="match status" value="1"/>
</dbReference>
<dbReference type="SMART" id="SM01360">
    <property type="entry name" value="A2M"/>
    <property type="match status" value="1"/>
</dbReference>
<dbReference type="SMART" id="SM01359">
    <property type="entry name" value="A2M_N_2"/>
    <property type="match status" value="1"/>
</dbReference>
<dbReference type="SMART" id="SM01361">
    <property type="entry name" value="A2M_recep"/>
    <property type="match status" value="1"/>
</dbReference>
<dbReference type="SMART" id="SM00104">
    <property type="entry name" value="ANATO"/>
    <property type="match status" value="1"/>
</dbReference>
<dbReference type="SMART" id="SM00643">
    <property type="entry name" value="C345C"/>
    <property type="match status" value="1"/>
</dbReference>
<dbReference type="SMART" id="SM01419">
    <property type="entry name" value="Thiol-ester_cl"/>
    <property type="match status" value="1"/>
</dbReference>
<dbReference type="SUPFAM" id="SSF49410">
    <property type="entry name" value="Alpha-macroglobulin receptor domain"/>
    <property type="match status" value="1"/>
</dbReference>
<dbReference type="SUPFAM" id="SSF47686">
    <property type="entry name" value="Anaphylotoxins (complement system)"/>
    <property type="match status" value="1"/>
</dbReference>
<dbReference type="SUPFAM" id="SSF48239">
    <property type="entry name" value="Terpenoid cyclases/Protein prenyltransferases"/>
    <property type="match status" value="1"/>
</dbReference>
<dbReference type="SUPFAM" id="SSF50242">
    <property type="entry name" value="TIMP-like"/>
    <property type="match status" value="1"/>
</dbReference>
<dbReference type="PROSITE" id="PS00477">
    <property type="entry name" value="ALPHA_2_MACROGLOBULIN"/>
    <property type="match status" value="1"/>
</dbReference>
<dbReference type="PROSITE" id="PS01177">
    <property type="entry name" value="ANAPHYLATOXIN_1"/>
    <property type="match status" value="1"/>
</dbReference>
<dbReference type="PROSITE" id="PS01178">
    <property type="entry name" value="ANAPHYLATOXIN_2"/>
    <property type="match status" value="1"/>
</dbReference>
<dbReference type="PROSITE" id="PS50189">
    <property type="entry name" value="NTR"/>
    <property type="match status" value="1"/>
</dbReference>
<organism>
    <name type="scientific">Rattus norvegicus</name>
    <name type="common">Rat</name>
    <dbReference type="NCBI Taxonomy" id="10116"/>
    <lineage>
        <taxon>Eukaryota</taxon>
        <taxon>Metazoa</taxon>
        <taxon>Chordata</taxon>
        <taxon>Craniata</taxon>
        <taxon>Vertebrata</taxon>
        <taxon>Euteleostomi</taxon>
        <taxon>Mammalia</taxon>
        <taxon>Eutheria</taxon>
        <taxon>Euarchontoglires</taxon>
        <taxon>Glires</taxon>
        <taxon>Rodentia</taxon>
        <taxon>Myomorpha</taxon>
        <taxon>Muroidea</taxon>
        <taxon>Muridae</taxon>
        <taxon>Murinae</taxon>
        <taxon>Rattus</taxon>
    </lineage>
</organism>
<evidence type="ECO:0000250" key="1">
    <source>
        <dbReference type="UniProtKB" id="P01024"/>
    </source>
</evidence>
<evidence type="ECO:0000255" key="2"/>
<evidence type="ECO:0000255" key="3">
    <source>
        <dbReference type="PROSITE-ProRule" id="PRU00022"/>
    </source>
</evidence>
<evidence type="ECO:0000255" key="4">
    <source>
        <dbReference type="PROSITE-ProRule" id="PRU00295"/>
    </source>
</evidence>
<evidence type="ECO:0000269" key="5">
    <source>
    </source>
</evidence>
<evidence type="ECO:0000269" key="6">
    <source>
    </source>
</evidence>
<evidence type="ECO:0000305" key="7"/>
<evidence type="ECO:0000305" key="8">
    <source>
    </source>
</evidence>
<evidence type="ECO:0007744" key="9">
    <source>
    </source>
</evidence>
<evidence type="ECO:0007829" key="10">
    <source>
        <dbReference type="PDB" id="1QQF"/>
    </source>
</evidence>
<evidence type="ECO:0007829" key="11">
    <source>
        <dbReference type="PDB" id="1QSJ"/>
    </source>
</evidence>
<keyword id="KW-0002">3D-structure</keyword>
<keyword id="KW-0145">Chemotaxis</keyword>
<keyword id="KW-0165">Cleavage on pair of basic residues</keyword>
<keyword id="KW-0179">Complement alternate pathway</keyword>
<keyword id="KW-0180">Complement pathway</keyword>
<keyword id="KW-0903">Direct protein sequencing</keyword>
<keyword id="KW-1015">Disulfide bond</keyword>
<keyword id="KW-0276">Fatty acid metabolism</keyword>
<keyword id="KW-0325">Glycoprotein</keyword>
<keyword id="KW-0391">Immunity</keyword>
<keyword id="KW-0395">Inflammatory response</keyword>
<keyword id="KW-0399">Innate immunity</keyword>
<keyword id="KW-0443">Lipid metabolism</keyword>
<keyword id="KW-0597">Phosphoprotein</keyword>
<keyword id="KW-1185">Reference proteome</keyword>
<keyword id="KW-0964">Secreted</keyword>
<keyword id="KW-0732">Signal</keyword>
<keyword id="KW-0882">Thioester bond</keyword>
<name>CO3_RAT</name>